<protein>
    <recommendedName>
        <fullName evidence="1">UPF0298 protein USA300HOU_1059</fullName>
    </recommendedName>
</protein>
<dbReference type="EMBL" id="CP000730">
    <property type="protein sequence ID" value="ABX29078.1"/>
    <property type="molecule type" value="Genomic_DNA"/>
</dbReference>
<dbReference type="RefSeq" id="WP_001049150.1">
    <property type="nucleotide sequence ID" value="NC_010079.1"/>
</dbReference>
<dbReference type="SMR" id="A8Z1Q5"/>
<dbReference type="KEGG" id="sax:USA300HOU_1059"/>
<dbReference type="HOGENOM" id="CLU_159890_2_1_9"/>
<dbReference type="BioCyc" id="SAUR451516-HMP:GTV5-1078-MONOMER"/>
<dbReference type="GO" id="GO:0005737">
    <property type="term" value="C:cytoplasm"/>
    <property type="evidence" value="ECO:0007669"/>
    <property type="project" value="UniProtKB-SubCell"/>
</dbReference>
<dbReference type="HAMAP" id="MF_01126">
    <property type="entry name" value="UPF0298"/>
    <property type="match status" value="1"/>
</dbReference>
<dbReference type="InterPro" id="IPR016979">
    <property type="entry name" value="DUF2129"/>
</dbReference>
<dbReference type="Pfam" id="PF09902">
    <property type="entry name" value="DUF2129"/>
    <property type="match status" value="1"/>
</dbReference>
<dbReference type="PIRSF" id="PIRSF031653">
    <property type="entry name" value="UCP031653"/>
    <property type="match status" value="1"/>
</dbReference>
<keyword id="KW-0963">Cytoplasm</keyword>
<accession>A8Z1Q5</accession>
<reference key="1">
    <citation type="journal article" date="2007" name="BMC Microbiol.">
        <title>Subtle genetic changes enhance virulence of methicillin resistant and sensitive Staphylococcus aureus.</title>
        <authorList>
            <person name="Highlander S.K."/>
            <person name="Hulten K.G."/>
            <person name="Qin X."/>
            <person name="Jiang H."/>
            <person name="Yerrapragada S."/>
            <person name="Mason E.O. Jr."/>
            <person name="Shang Y."/>
            <person name="Williams T.M."/>
            <person name="Fortunov R.M."/>
            <person name="Liu Y."/>
            <person name="Igboeli O."/>
            <person name="Petrosino J."/>
            <person name="Tirumalai M."/>
            <person name="Uzman A."/>
            <person name="Fox G.E."/>
            <person name="Cardenas A.M."/>
            <person name="Muzny D.M."/>
            <person name="Hemphill L."/>
            <person name="Ding Y."/>
            <person name="Dugan S."/>
            <person name="Blyth P.R."/>
            <person name="Buhay C.J."/>
            <person name="Dinh H.H."/>
            <person name="Hawes A.C."/>
            <person name="Holder M."/>
            <person name="Kovar C.L."/>
            <person name="Lee S.L."/>
            <person name="Liu W."/>
            <person name="Nazareth L.V."/>
            <person name="Wang Q."/>
            <person name="Zhou J."/>
            <person name="Kaplan S.L."/>
            <person name="Weinstock G.M."/>
        </authorList>
    </citation>
    <scope>NUCLEOTIDE SEQUENCE [LARGE SCALE GENOMIC DNA]</scope>
    <source>
        <strain>USA300 / TCH1516</strain>
    </source>
</reference>
<name>Y1059_STAAT</name>
<evidence type="ECO:0000255" key="1">
    <source>
        <dbReference type="HAMAP-Rule" id="MF_01126"/>
    </source>
</evidence>
<feature type="chain" id="PRO_1000085017" description="UPF0298 protein USA300HOU_1059">
    <location>
        <begin position="1"/>
        <end position="84"/>
    </location>
</feature>
<gene>
    <name type="ordered locus">USA300HOU_1059</name>
</gene>
<sequence>MNLIPRTSIVVYLKHMKHERQIRKYGHIVHSNRDRKFVIMYVNEQDVDQIVHKLMQLKYVRHIDGSPYKYLKKTYEKEKHEIYN</sequence>
<proteinExistence type="inferred from homology"/>
<comment type="subcellular location">
    <subcellularLocation>
        <location evidence="1">Cytoplasm</location>
    </subcellularLocation>
</comment>
<comment type="similarity">
    <text evidence="1">Belongs to the UPF0298 family.</text>
</comment>
<organism>
    <name type="scientific">Staphylococcus aureus (strain USA300 / TCH1516)</name>
    <dbReference type="NCBI Taxonomy" id="451516"/>
    <lineage>
        <taxon>Bacteria</taxon>
        <taxon>Bacillati</taxon>
        <taxon>Bacillota</taxon>
        <taxon>Bacilli</taxon>
        <taxon>Bacillales</taxon>
        <taxon>Staphylococcaceae</taxon>
        <taxon>Staphylococcus</taxon>
    </lineage>
</organism>